<feature type="signal peptide" evidence="1">
    <location>
        <begin position="1"/>
        <end position="19"/>
    </location>
</feature>
<feature type="peptide" id="PRO_0000020556" description="Vasotocin">
    <location>
        <begin position="20"/>
        <end position="28"/>
    </location>
</feature>
<feature type="chain" id="PRO_0000020557" description="Neurophysin VT 1">
    <location>
        <begin position="32"/>
        <end position="153"/>
    </location>
</feature>
<feature type="modified residue" description="Glycine amide" evidence="1">
    <location>
        <position position="28"/>
    </location>
</feature>
<feature type="disulfide bond" evidence="2">
    <location>
        <begin position="20"/>
        <end position="25"/>
    </location>
</feature>
<feature type="disulfide bond" evidence="2">
    <location>
        <begin position="41"/>
        <end position="85"/>
    </location>
</feature>
<feature type="disulfide bond" evidence="2">
    <location>
        <begin position="44"/>
        <end position="58"/>
    </location>
</feature>
<feature type="disulfide bond" evidence="2">
    <location>
        <begin position="52"/>
        <end position="75"/>
    </location>
</feature>
<feature type="disulfide bond" evidence="2">
    <location>
        <begin position="59"/>
        <end position="65"/>
    </location>
</feature>
<feature type="disulfide bond" evidence="2">
    <location>
        <begin position="92"/>
        <end position="105"/>
    </location>
</feature>
<feature type="disulfide bond" evidence="2">
    <location>
        <begin position="99"/>
        <end position="117"/>
    </location>
</feature>
<feature type="disulfide bond" evidence="2">
    <location>
        <begin position="106"/>
        <end position="111"/>
    </location>
</feature>
<comment type="function">
    <text>Vasotocin is probably an antidiuretic hormone.</text>
</comment>
<comment type="subcellular location">
    <subcellularLocation>
        <location>Secreted</location>
    </subcellularLocation>
</comment>
<comment type="PTM">
    <text evidence="1">Seven disulfide bonds are present in neurophysin.</text>
</comment>
<comment type="similarity">
    <text evidence="3">Belongs to the vasopressin/oxytocin family.</text>
</comment>
<protein>
    <recommendedName>
        <fullName>Vasotocin-neurophysin VT 1</fullName>
    </recommendedName>
    <component>
        <recommendedName>
            <fullName>Vasotocin</fullName>
            <shortName>VT</shortName>
        </recommendedName>
    </component>
    <component>
        <recommendedName>
            <fullName>Neurophysin VT 1</fullName>
        </recommendedName>
    </component>
</protein>
<accession>O42499</accession>
<dbReference type="EMBL" id="U90880">
    <property type="protein sequence ID" value="AAC60293.1"/>
    <property type="molecule type" value="Genomic_DNA"/>
</dbReference>
<dbReference type="SMR" id="O42499"/>
<dbReference type="STRING" id="31033.ENSTRUP00000069487"/>
<dbReference type="eggNOG" id="ENOG502S21K">
    <property type="taxonomic scope" value="Eukaryota"/>
</dbReference>
<dbReference type="InParanoid" id="O42499"/>
<dbReference type="Proteomes" id="UP000005226">
    <property type="component" value="Unplaced"/>
</dbReference>
<dbReference type="GO" id="GO:0005615">
    <property type="term" value="C:extracellular space"/>
    <property type="evidence" value="ECO:0007669"/>
    <property type="project" value="TreeGrafter"/>
</dbReference>
<dbReference type="GO" id="GO:0030141">
    <property type="term" value="C:secretory granule"/>
    <property type="evidence" value="ECO:0007669"/>
    <property type="project" value="TreeGrafter"/>
</dbReference>
<dbReference type="GO" id="GO:0005185">
    <property type="term" value="F:neurohypophyseal hormone activity"/>
    <property type="evidence" value="ECO:0007669"/>
    <property type="project" value="InterPro"/>
</dbReference>
<dbReference type="FunFam" id="2.60.9.10:FF:000001">
    <property type="entry name" value="oxytocin-neurophysin 1"/>
    <property type="match status" value="1"/>
</dbReference>
<dbReference type="Gene3D" id="2.60.9.10">
    <property type="entry name" value="Neurohypophysial hormone domain"/>
    <property type="match status" value="1"/>
</dbReference>
<dbReference type="InterPro" id="IPR000981">
    <property type="entry name" value="Neurhyp_horm"/>
</dbReference>
<dbReference type="InterPro" id="IPR036387">
    <property type="entry name" value="Neurhyp_horm_dom_sf"/>
</dbReference>
<dbReference type="InterPro" id="IPR022423">
    <property type="entry name" value="Neurohypophysial_hormone_CS"/>
</dbReference>
<dbReference type="PANTHER" id="PTHR11681">
    <property type="entry name" value="NEUROPHYSIN"/>
    <property type="match status" value="1"/>
</dbReference>
<dbReference type="PANTHER" id="PTHR11681:SF13">
    <property type="entry name" value="VASOPRESSIN-NEUROPHYSIN 2-COPEPTIN PRECURSOR"/>
    <property type="match status" value="1"/>
</dbReference>
<dbReference type="Pfam" id="PF00220">
    <property type="entry name" value="Hormone_4"/>
    <property type="match status" value="1"/>
</dbReference>
<dbReference type="Pfam" id="PF00184">
    <property type="entry name" value="Hormone_5"/>
    <property type="match status" value="1"/>
</dbReference>
<dbReference type="PIRSF" id="PIRSF001815">
    <property type="entry name" value="Nonapeptide_hormone_precursor"/>
    <property type="match status" value="1"/>
</dbReference>
<dbReference type="PRINTS" id="PR00831">
    <property type="entry name" value="NEUROPHYSIN"/>
</dbReference>
<dbReference type="SMART" id="SM00003">
    <property type="entry name" value="NH"/>
    <property type="match status" value="1"/>
</dbReference>
<dbReference type="SUPFAM" id="SSF49606">
    <property type="entry name" value="Neurophysin II"/>
    <property type="match status" value="1"/>
</dbReference>
<dbReference type="PROSITE" id="PS00264">
    <property type="entry name" value="NEUROHYPOPHYS_HORM"/>
    <property type="match status" value="1"/>
</dbReference>
<proteinExistence type="inferred from homology"/>
<keyword id="KW-0027">Amidation</keyword>
<keyword id="KW-0165">Cleavage on pair of basic residues</keyword>
<keyword id="KW-1015">Disulfide bond</keyword>
<keyword id="KW-0372">Hormone</keyword>
<keyword id="KW-1185">Reference proteome</keyword>
<keyword id="KW-0964">Secreted</keyword>
<keyword id="KW-0732">Signal</keyword>
<name>NEUV_TAKRU</name>
<organism>
    <name type="scientific">Takifugu rubripes</name>
    <name type="common">Japanese pufferfish</name>
    <name type="synonym">Fugu rubripes</name>
    <dbReference type="NCBI Taxonomy" id="31033"/>
    <lineage>
        <taxon>Eukaryota</taxon>
        <taxon>Metazoa</taxon>
        <taxon>Chordata</taxon>
        <taxon>Craniata</taxon>
        <taxon>Vertebrata</taxon>
        <taxon>Euteleostomi</taxon>
        <taxon>Actinopterygii</taxon>
        <taxon>Neopterygii</taxon>
        <taxon>Teleostei</taxon>
        <taxon>Neoteleostei</taxon>
        <taxon>Acanthomorphata</taxon>
        <taxon>Eupercaria</taxon>
        <taxon>Tetraodontiformes</taxon>
        <taxon>Tetradontoidea</taxon>
        <taxon>Tetraodontidae</taxon>
        <taxon>Takifugu</taxon>
    </lineage>
</organism>
<sequence length="153" mass="15890">MPQCALLLSLLGLLALSSACYIQNCPRGGKRALPETGIRQCMSCGPRDRGRCFGPNICCGEALGCLMGSPETARCAGENYLLTPCQAGGRPCGSEGGRCAVSGLCCNSESCAVDSDCLGETESLEPGDSSADSSPTELLLRLLHMSSRGQSEY</sequence>
<evidence type="ECO:0000250" key="1"/>
<evidence type="ECO:0000250" key="2">
    <source>
        <dbReference type="UniProtKB" id="P01175"/>
    </source>
</evidence>
<evidence type="ECO:0000305" key="3"/>
<reference key="1">
    <citation type="journal article" date="1995" name="Adv. Exp. Med. Biol.">
        <title>Structure and organization of the isotocin and vasotocin genes from teleosts.</title>
        <authorList>
            <person name="Venkatesh B."/>
            <person name="Brenner S."/>
        </authorList>
    </citation>
    <scope>NUCLEOTIDE SEQUENCE [GENOMIC DNA]</scope>
</reference>
<reference key="2">
    <citation type="journal article" date="1997" name="Proc. Natl. Acad. Sci. U.S.A.">
        <title>Transgenic rats reveal functional conservation of regulatory controls between the Fugu isotocin and rat oxytocin genes.</title>
        <authorList>
            <person name="Venkatesh B."/>
            <person name="Si-Hoe S.L."/>
            <person name="Murphy D."/>
            <person name="Brenner S."/>
        </authorList>
    </citation>
    <scope>NUCLEOTIDE SEQUENCE [GENOMIC DNA]</scope>
</reference>